<evidence type="ECO:0000255" key="1"/>
<evidence type="ECO:0000305" key="2"/>
<proteinExistence type="inferred from homology"/>
<organism>
    <name type="scientific">African swine fever virus (isolate Tick/Malawi/Lil 20-1/1983)</name>
    <name type="common">ASFV</name>
    <dbReference type="NCBI Taxonomy" id="10500"/>
    <lineage>
        <taxon>Viruses</taxon>
        <taxon>Varidnaviria</taxon>
        <taxon>Bamfordvirae</taxon>
        <taxon>Nucleocytoviricota</taxon>
        <taxon>Pokkesviricetes</taxon>
        <taxon>Asfuvirales</taxon>
        <taxon>Asfarviridae</taxon>
        <taxon>Asfivirus</taxon>
        <taxon>African swine fever virus</taxon>
    </lineage>
</organism>
<feature type="chain" id="PRO_0000373673" description="Zinc finger protein B385R">
    <location>
        <begin position="1"/>
        <end position="385"/>
    </location>
</feature>
<feature type="zinc finger region" description="C2H2-type">
    <location>
        <begin position="166"/>
        <end position="190"/>
    </location>
</feature>
<feature type="zinc finger region" description="C2H2-type" evidence="1">
    <location>
        <begin position="168"/>
        <end position="190"/>
    </location>
</feature>
<comment type="induction">
    <text evidence="2">Expressed in the late phase of the viral replicative cycle.</text>
</comment>
<comment type="similarity">
    <text evidence="2">Belongs to the asfivirus B385R family.</text>
</comment>
<keyword id="KW-0426">Late protein</keyword>
<keyword id="KW-0479">Metal-binding</keyword>
<keyword id="KW-0862">Zinc</keyword>
<keyword id="KW-0863">Zinc-finger</keyword>
<organismHost>
    <name type="scientific">Ornithodoros</name>
    <name type="common">relapsing fever ticks</name>
    <dbReference type="NCBI Taxonomy" id="6937"/>
</organismHost>
<organismHost>
    <name type="scientific">Phacochoerus aethiopicus</name>
    <name type="common">Warthog</name>
    <dbReference type="NCBI Taxonomy" id="85517"/>
</organismHost>
<organismHost>
    <name type="scientific">Phacochoerus africanus</name>
    <name type="common">Warthog</name>
    <dbReference type="NCBI Taxonomy" id="41426"/>
</organismHost>
<organismHost>
    <name type="scientific">Potamochoerus larvatus</name>
    <name type="common">Bushpig</name>
    <dbReference type="NCBI Taxonomy" id="273792"/>
</organismHost>
<organismHost>
    <name type="scientific">Sus scrofa</name>
    <name type="common">Pig</name>
    <dbReference type="NCBI Taxonomy" id="9823"/>
</organismHost>
<gene>
    <name type="ordered locus">Mal-088</name>
</gene>
<name>VF385_ASFM2</name>
<dbReference type="EMBL" id="AY261361">
    <property type="status" value="NOT_ANNOTATED_CDS"/>
    <property type="molecule type" value="Genomic_DNA"/>
</dbReference>
<dbReference type="EMBL" id="L00966">
    <property type="protein sequence ID" value="AAL31337.1"/>
    <property type="molecule type" value="Genomic_DNA"/>
</dbReference>
<dbReference type="SMR" id="Q8V9S7"/>
<dbReference type="Proteomes" id="UP000000860">
    <property type="component" value="Segment"/>
</dbReference>
<dbReference type="GO" id="GO:0008270">
    <property type="term" value="F:zinc ion binding"/>
    <property type="evidence" value="ECO:0007669"/>
    <property type="project" value="UniProtKB-KW"/>
</dbReference>
<dbReference type="GO" id="GO:0046782">
    <property type="term" value="P:regulation of viral transcription"/>
    <property type="evidence" value="ECO:0007669"/>
    <property type="project" value="InterPro"/>
</dbReference>
<dbReference type="InterPro" id="IPR007031">
    <property type="entry name" value="Poxvirus_VLTF3"/>
</dbReference>
<dbReference type="InterPro" id="IPR014900">
    <property type="entry name" value="VLTF-3_Zn_ribbon"/>
</dbReference>
<dbReference type="Pfam" id="PF08792">
    <property type="entry name" value="A2L_zn_ribbon"/>
    <property type="match status" value="1"/>
</dbReference>
<dbReference type="Pfam" id="PF04947">
    <property type="entry name" value="Pox_VLTF3"/>
    <property type="match status" value="1"/>
</dbReference>
<dbReference type="PROSITE" id="PS00028">
    <property type="entry name" value="ZINC_FINGER_C2H2_1"/>
    <property type="match status" value="1"/>
</dbReference>
<reference key="1">
    <citation type="submission" date="2001-11" db="EMBL/GenBank/DDBJ databases">
        <title>Nucleotide sequence and analysis of 16.25 kilobase pairs of the African swine fever virus genome that span the central variable region.</title>
        <authorList>
            <person name="Roberts P.C."/>
            <person name="Lu Z."/>
            <person name="Rock D.L."/>
        </authorList>
    </citation>
    <scope>NUCLEOTIDE SEQUENCE [GENOMIC DNA]</scope>
</reference>
<reference key="2">
    <citation type="submission" date="2003-03" db="EMBL/GenBank/DDBJ databases">
        <title>African swine fever virus genomes.</title>
        <authorList>
            <person name="Kutish G.F."/>
            <person name="Rock D.L."/>
        </authorList>
    </citation>
    <scope>NUCLEOTIDE SEQUENCE [LARGE SCALE GENOMIC DNA]</scope>
</reference>
<protein>
    <recommendedName>
        <fullName>Zinc finger protein B385R</fullName>
        <shortName>pB385R</shortName>
    </recommendedName>
</protein>
<sequence length="385" mass="45257">MDEIINKYQAVEKLFKEIQEGLAAYDQYKTLISELLHYNNHIKQEYFNFLMIISPYLIRAHSGETLRNKVNNEIKRLILVENINTKISKTLVSVNFLLQKKLSVDGVKTKNMWCTNNPMLQVKTAHNLFKQLCDTQSKTQWVQTLKYKECKYCHTDMVFNTTQFGLQCPNCGCIQELMGTIFDETHFYNHDGQKAKSGIFNPNRHYRFWIEHILGRNSEQELGTKQDPCGTKVLQQLKKIIKRDNKCIALLTVENIRKMLKEINRTDLNNCVSLILRKLTGVGPPQISESILLRGEYIFTEAIKIREKVCKKGRINRNYYPYYIYKIFDAILPPNDTTNRRILQYIHLQGNDTLANNDSEWESICMELPEIKWKPTDRTHCVHFF</sequence>
<accession>Q8V9S7</accession>